<evidence type="ECO:0000255" key="1">
    <source>
        <dbReference type="HAMAP-Rule" id="MF_00500"/>
    </source>
</evidence>
<evidence type="ECO:0000305" key="2"/>
<reference key="1">
    <citation type="journal article" date="2005" name="Proc. Natl. Acad. Sci. U.S.A.">
        <title>Genome analysis of multiple pathogenic isolates of Streptococcus agalactiae: implications for the microbial 'pan-genome'.</title>
        <authorList>
            <person name="Tettelin H."/>
            <person name="Masignani V."/>
            <person name="Cieslewicz M.J."/>
            <person name="Donati C."/>
            <person name="Medini D."/>
            <person name="Ward N.L."/>
            <person name="Angiuoli S.V."/>
            <person name="Crabtree J."/>
            <person name="Jones A.L."/>
            <person name="Durkin A.S."/>
            <person name="DeBoy R.T."/>
            <person name="Davidsen T.M."/>
            <person name="Mora M."/>
            <person name="Scarselli M."/>
            <person name="Margarit y Ros I."/>
            <person name="Peterson J.D."/>
            <person name="Hauser C.R."/>
            <person name="Sundaram J.P."/>
            <person name="Nelson W.C."/>
            <person name="Madupu R."/>
            <person name="Brinkac L.M."/>
            <person name="Dodson R.J."/>
            <person name="Rosovitz M.J."/>
            <person name="Sullivan S.A."/>
            <person name="Daugherty S.C."/>
            <person name="Haft D.H."/>
            <person name="Selengut J."/>
            <person name="Gwinn M.L."/>
            <person name="Zhou L."/>
            <person name="Zafar N."/>
            <person name="Khouri H."/>
            <person name="Radune D."/>
            <person name="Dimitrov G."/>
            <person name="Watkins K."/>
            <person name="O'Connor K.J."/>
            <person name="Smith S."/>
            <person name="Utterback T.R."/>
            <person name="White O."/>
            <person name="Rubens C.E."/>
            <person name="Grandi G."/>
            <person name="Madoff L.C."/>
            <person name="Kasper D.L."/>
            <person name="Telford J.L."/>
            <person name="Wessels M.R."/>
            <person name="Rappuoli R."/>
            <person name="Fraser C.M."/>
        </authorList>
    </citation>
    <scope>NUCLEOTIDE SEQUENCE [LARGE SCALE GENOMIC DNA]</scope>
    <source>
        <strain>ATCC 27591 / A909 / CDC SS700</strain>
    </source>
</reference>
<gene>
    <name evidence="1" type="primary">rpsT</name>
    <name type="ordered locus">SAK_1045</name>
</gene>
<keyword id="KW-0687">Ribonucleoprotein</keyword>
<keyword id="KW-0689">Ribosomal protein</keyword>
<keyword id="KW-0694">RNA-binding</keyword>
<keyword id="KW-0699">rRNA-binding</keyword>
<name>RS20_STRA1</name>
<organism>
    <name type="scientific">Streptococcus agalactiae serotype Ia (strain ATCC 27591 / A909 / CDC SS700)</name>
    <dbReference type="NCBI Taxonomy" id="205921"/>
    <lineage>
        <taxon>Bacteria</taxon>
        <taxon>Bacillati</taxon>
        <taxon>Bacillota</taxon>
        <taxon>Bacilli</taxon>
        <taxon>Lactobacillales</taxon>
        <taxon>Streptococcaceae</taxon>
        <taxon>Streptococcus</taxon>
    </lineage>
</organism>
<accession>Q3K1D7</accession>
<dbReference type="EMBL" id="CP000114">
    <property type="protein sequence ID" value="ABA44569.1"/>
    <property type="status" value="ALT_INIT"/>
    <property type="molecule type" value="Genomic_DNA"/>
</dbReference>
<dbReference type="SMR" id="Q3K1D7"/>
<dbReference type="KEGG" id="sak:SAK_1045"/>
<dbReference type="HOGENOM" id="CLU_160655_1_1_9"/>
<dbReference type="GO" id="GO:0005829">
    <property type="term" value="C:cytosol"/>
    <property type="evidence" value="ECO:0007669"/>
    <property type="project" value="TreeGrafter"/>
</dbReference>
<dbReference type="GO" id="GO:0015935">
    <property type="term" value="C:small ribosomal subunit"/>
    <property type="evidence" value="ECO:0007669"/>
    <property type="project" value="TreeGrafter"/>
</dbReference>
<dbReference type="GO" id="GO:0070181">
    <property type="term" value="F:small ribosomal subunit rRNA binding"/>
    <property type="evidence" value="ECO:0007669"/>
    <property type="project" value="TreeGrafter"/>
</dbReference>
<dbReference type="GO" id="GO:0003735">
    <property type="term" value="F:structural constituent of ribosome"/>
    <property type="evidence" value="ECO:0007669"/>
    <property type="project" value="InterPro"/>
</dbReference>
<dbReference type="GO" id="GO:0006412">
    <property type="term" value="P:translation"/>
    <property type="evidence" value="ECO:0007669"/>
    <property type="project" value="UniProtKB-UniRule"/>
</dbReference>
<dbReference type="FunFam" id="1.20.58.110:FF:000001">
    <property type="entry name" value="30S ribosomal protein S20"/>
    <property type="match status" value="1"/>
</dbReference>
<dbReference type="Gene3D" id="1.20.58.110">
    <property type="entry name" value="Ribosomal protein S20"/>
    <property type="match status" value="1"/>
</dbReference>
<dbReference type="HAMAP" id="MF_00500">
    <property type="entry name" value="Ribosomal_bS20"/>
    <property type="match status" value="1"/>
</dbReference>
<dbReference type="InterPro" id="IPR002583">
    <property type="entry name" value="Ribosomal_bS20"/>
</dbReference>
<dbReference type="InterPro" id="IPR036510">
    <property type="entry name" value="Ribosomal_bS20_sf"/>
</dbReference>
<dbReference type="NCBIfam" id="TIGR00029">
    <property type="entry name" value="S20"/>
    <property type="match status" value="1"/>
</dbReference>
<dbReference type="PANTHER" id="PTHR33398">
    <property type="entry name" value="30S RIBOSOMAL PROTEIN S20"/>
    <property type="match status" value="1"/>
</dbReference>
<dbReference type="PANTHER" id="PTHR33398:SF1">
    <property type="entry name" value="SMALL RIBOSOMAL SUBUNIT PROTEIN BS20C"/>
    <property type="match status" value="1"/>
</dbReference>
<dbReference type="Pfam" id="PF01649">
    <property type="entry name" value="Ribosomal_S20p"/>
    <property type="match status" value="1"/>
</dbReference>
<dbReference type="SUPFAM" id="SSF46992">
    <property type="entry name" value="Ribosomal protein S20"/>
    <property type="match status" value="1"/>
</dbReference>
<feature type="chain" id="PRO_0000224956" description="Small ribosomal subunit protein bS20">
    <location>
        <begin position="1"/>
        <end position="77"/>
    </location>
</feature>
<comment type="function">
    <text evidence="1">Binds directly to 16S ribosomal RNA.</text>
</comment>
<comment type="similarity">
    <text evidence="1">Belongs to the bacterial ribosomal protein bS20 family.</text>
</comment>
<comment type="sequence caution" evidence="2">
    <conflict type="erroneous initiation">
        <sequence resource="EMBL-CDS" id="ABA44569"/>
    </conflict>
</comment>
<sequence length="77" mass="8331">MANIKSAIKRAELNVKQNEKNSAQKSAMRTAIKAFEANPSEELYRAASSSIDKAASKGLIHTNKASRDKARLATKLG</sequence>
<protein>
    <recommendedName>
        <fullName evidence="1">Small ribosomal subunit protein bS20</fullName>
    </recommendedName>
    <alternativeName>
        <fullName evidence="2">30S ribosomal protein S20</fullName>
    </alternativeName>
</protein>
<proteinExistence type="inferred from homology"/>